<comment type="function">
    <text evidence="3">Sugar transporter.</text>
</comment>
<comment type="subcellular location">
    <subcellularLocation>
        <location evidence="1">Membrane</location>
        <topology evidence="1">Multi-pass membrane protein</topology>
    </subcellularLocation>
</comment>
<comment type="similarity">
    <text evidence="3">Belongs to the major facilitator superfamily. Sugar transporter (TC 2.A.1.1) family.</text>
</comment>
<comment type="sequence caution" evidence="3">
    <conflict type="erroneous gene model prediction">
        <sequence resource="EMBL-CDS" id="AAD03460"/>
    </conflict>
</comment>
<comment type="sequence caution" evidence="3">
    <conflict type="erroneous gene model prediction">
        <sequence resource="EMBL-CDS" id="CAB80841"/>
    </conflict>
</comment>
<evidence type="ECO:0000250" key="1"/>
<evidence type="ECO:0000255" key="2"/>
<evidence type="ECO:0000305" key="3"/>
<reference key="1">
    <citation type="journal article" date="1999" name="Nature">
        <title>Sequence and analysis of chromosome 4 of the plant Arabidopsis thaliana.</title>
        <authorList>
            <person name="Mayer K.F.X."/>
            <person name="Schueller C."/>
            <person name="Wambutt R."/>
            <person name="Murphy G."/>
            <person name="Volckaert G."/>
            <person name="Pohl T."/>
            <person name="Duesterhoeft A."/>
            <person name="Stiekema W."/>
            <person name="Entian K.-D."/>
            <person name="Terryn N."/>
            <person name="Harris B."/>
            <person name="Ansorge W."/>
            <person name="Brandt P."/>
            <person name="Grivell L.A."/>
            <person name="Rieger M."/>
            <person name="Weichselgartner M."/>
            <person name="de Simone V."/>
            <person name="Obermaier B."/>
            <person name="Mache R."/>
            <person name="Mueller M."/>
            <person name="Kreis M."/>
            <person name="Delseny M."/>
            <person name="Puigdomenech P."/>
            <person name="Watson M."/>
            <person name="Schmidtheini T."/>
            <person name="Reichert B."/>
            <person name="Portetelle D."/>
            <person name="Perez-Alonso M."/>
            <person name="Boutry M."/>
            <person name="Bancroft I."/>
            <person name="Vos P."/>
            <person name="Hoheisel J."/>
            <person name="Zimmermann W."/>
            <person name="Wedler H."/>
            <person name="Ridley P."/>
            <person name="Langham S.-A."/>
            <person name="McCullagh B."/>
            <person name="Bilham L."/>
            <person name="Robben J."/>
            <person name="van der Schueren J."/>
            <person name="Grymonprez B."/>
            <person name="Chuang Y.-J."/>
            <person name="Vandenbussche F."/>
            <person name="Braeken M."/>
            <person name="Weltjens I."/>
            <person name="Voet M."/>
            <person name="Bastiaens I."/>
            <person name="Aert R."/>
            <person name="Defoor E."/>
            <person name="Weitzenegger T."/>
            <person name="Bothe G."/>
            <person name="Ramsperger U."/>
            <person name="Hilbert H."/>
            <person name="Braun M."/>
            <person name="Holzer E."/>
            <person name="Brandt A."/>
            <person name="Peters S."/>
            <person name="van Staveren M."/>
            <person name="Dirkse W."/>
            <person name="Mooijman P."/>
            <person name="Klein Lankhorst R."/>
            <person name="Rose M."/>
            <person name="Hauf J."/>
            <person name="Koetter P."/>
            <person name="Berneiser S."/>
            <person name="Hempel S."/>
            <person name="Feldpausch M."/>
            <person name="Lamberth S."/>
            <person name="Van den Daele H."/>
            <person name="De Keyser A."/>
            <person name="Buysshaert C."/>
            <person name="Gielen J."/>
            <person name="Villarroel R."/>
            <person name="De Clercq R."/>
            <person name="van Montagu M."/>
            <person name="Rogers J."/>
            <person name="Cronin A."/>
            <person name="Quail M.A."/>
            <person name="Bray-Allen S."/>
            <person name="Clark L."/>
            <person name="Doggett J."/>
            <person name="Hall S."/>
            <person name="Kay M."/>
            <person name="Lennard N."/>
            <person name="McLay K."/>
            <person name="Mayes R."/>
            <person name="Pettett A."/>
            <person name="Rajandream M.A."/>
            <person name="Lyne M."/>
            <person name="Benes V."/>
            <person name="Rechmann S."/>
            <person name="Borkova D."/>
            <person name="Bloecker H."/>
            <person name="Scharfe M."/>
            <person name="Grimm M."/>
            <person name="Loehnert T.-H."/>
            <person name="Dose S."/>
            <person name="de Haan M."/>
            <person name="Maarse A.C."/>
            <person name="Schaefer M."/>
            <person name="Mueller-Auer S."/>
            <person name="Gabel C."/>
            <person name="Fuchs M."/>
            <person name="Fartmann B."/>
            <person name="Granderath K."/>
            <person name="Dauner D."/>
            <person name="Herzl A."/>
            <person name="Neumann S."/>
            <person name="Argiriou A."/>
            <person name="Vitale D."/>
            <person name="Liguori R."/>
            <person name="Piravandi E."/>
            <person name="Massenet O."/>
            <person name="Quigley F."/>
            <person name="Clabauld G."/>
            <person name="Muendlein A."/>
            <person name="Felber R."/>
            <person name="Schnabl S."/>
            <person name="Hiller R."/>
            <person name="Schmidt W."/>
            <person name="Lecharny A."/>
            <person name="Aubourg S."/>
            <person name="Chefdor F."/>
            <person name="Cooke R."/>
            <person name="Berger C."/>
            <person name="Monfort A."/>
            <person name="Casacuberta E."/>
            <person name="Gibbons T."/>
            <person name="Weber N."/>
            <person name="Vandenbol M."/>
            <person name="Bargues M."/>
            <person name="Terol J."/>
            <person name="Torres A."/>
            <person name="Perez-Perez A."/>
            <person name="Purnelle B."/>
            <person name="Bent E."/>
            <person name="Johnson S."/>
            <person name="Tacon D."/>
            <person name="Jesse T."/>
            <person name="Heijnen L."/>
            <person name="Schwarz S."/>
            <person name="Scholler P."/>
            <person name="Heber S."/>
            <person name="Francs P."/>
            <person name="Bielke C."/>
            <person name="Frishman D."/>
            <person name="Haase D."/>
            <person name="Lemcke K."/>
            <person name="Mewes H.-W."/>
            <person name="Stocker S."/>
            <person name="Zaccaria P."/>
            <person name="Bevan M."/>
            <person name="Wilson R.K."/>
            <person name="de la Bastide M."/>
            <person name="Habermann K."/>
            <person name="Parnell L."/>
            <person name="Dedhia N."/>
            <person name="Gnoj L."/>
            <person name="Schutz K."/>
            <person name="Huang E."/>
            <person name="Spiegel L."/>
            <person name="Sekhon M."/>
            <person name="Murray J."/>
            <person name="Sheet P."/>
            <person name="Cordes M."/>
            <person name="Abu-Threideh J."/>
            <person name="Stoneking T."/>
            <person name="Kalicki J."/>
            <person name="Graves T."/>
            <person name="Harmon G."/>
            <person name="Edwards J."/>
            <person name="Latreille P."/>
            <person name="Courtney L."/>
            <person name="Cloud J."/>
            <person name="Abbott A."/>
            <person name="Scott K."/>
            <person name="Johnson D."/>
            <person name="Minx P."/>
            <person name="Bentley D."/>
            <person name="Fulton B."/>
            <person name="Miller N."/>
            <person name="Greco T."/>
            <person name="Kemp K."/>
            <person name="Kramer J."/>
            <person name="Fulton L."/>
            <person name="Mardis E."/>
            <person name="Dante M."/>
            <person name="Pepin K."/>
            <person name="Hillier L.W."/>
            <person name="Nelson J."/>
            <person name="Spieth J."/>
            <person name="Ryan E."/>
            <person name="Andrews S."/>
            <person name="Geisel C."/>
            <person name="Layman D."/>
            <person name="Du H."/>
            <person name="Ali J."/>
            <person name="Berghoff A."/>
            <person name="Jones K."/>
            <person name="Drone K."/>
            <person name="Cotton M."/>
            <person name="Joshu C."/>
            <person name="Antonoiu B."/>
            <person name="Zidanic M."/>
            <person name="Strong C."/>
            <person name="Sun H."/>
            <person name="Lamar B."/>
            <person name="Yordan C."/>
            <person name="Ma P."/>
            <person name="Zhong J."/>
            <person name="Preston R."/>
            <person name="Vil D."/>
            <person name="Shekher M."/>
            <person name="Matero A."/>
            <person name="Shah R."/>
            <person name="Swaby I.K."/>
            <person name="O'Shaughnessy A."/>
            <person name="Rodriguez M."/>
            <person name="Hoffman J."/>
            <person name="Till S."/>
            <person name="Granat S."/>
            <person name="Shohdy N."/>
            <person name="Hasegawa A."/>
            <person name="Hameed A."/>
            <person name="Lodhi M."/>
            <person name="Johnson A."/>
            <person name="Chen E."/>
            <person name="Marra M.A."/>
            <person name="Martienssen R."/>
            <person name="McCombie W.R."/>
        </authorList>
    </citation>
    <scope>NUCLEOTIDE SEQUENCE [LARGE SCALE GENOMIC DNA]</scope>
    <source>
        <strain>cv. Columbia</strain>
    </source>
</reference>
<reference key="2">
    <citation type="journal article" date="2017" name="Plant J.">
        <title>Araport11: a complete reannotation of the Arabidopsis thaliana reference genome.</title>
        <authorList>
            <person name="Cheng C.Y."/>
            <person name="Krishnakumar V."/>
            <person name="Chan A.P."/>
            <person name="Thibaud-Nissen F."/>
            <person name="Schobel S."/>
            <person name="Town C.D."/>
        </authorList>
    </citation>
    <scope>GENOME REANNOTATION</scope>
    <source>
        <strain>cv. Columbia</strain>
    </source>
</reference>
<reference key="3">
    <citation type="journal article" date="2006" name="BMC Evol. Biol.">
        <title>The monosaccharide transporter gene family in land plants is ancient and shows differential subfamily expression and expansion across lineages.</title>
        <authorList>
            <person name="Johnson D.A."/>
            <person name="Hill J.P."/>
            <person name="Thomas M.A."/>
        </authorList>
    </citation>
    <scope>GENE FAMILY</scope>
</reference>
<name>EDL15_ARATH</name>
<feature type="chain" id="PRO_0000259865" description="Sugar transporter ERD6-like 15">
    <location>
        <begin position="1"/>
        <end position="478"/>
    </location>
</feature>
<feature type="transmembrane region" description="Helical; Name=1" evidence="2">
    <location>
        <begin position="31"/>
        <end position="51"/>
    </location>
</feature>
<feature type="transmembrane region" description="Helical; Name=2" evidence="2">
    <location>
        <begin position="67"/>
        <end position="87"/>
    </location>
</feature>
<feature type="transmembrane region" description="Helical; Name=3" evidence="2">
    <location>
        <begin position="106"/>
        <end position="126"/>
    </location>
</feature>
<feature type="transmembrane region" description="Helical; Name=4" evidence="2">
    <location>
        <begin position="129"/>
        <end position="149"/>
    </location>
</feature>
<feature type="transmembrane region" description="Helical; Name=5" evidence="2">
    <location>
        <begin position="161"/>
        <end position="181"/>
    </location>
</feature>
<feature type="transmembrane region" description="Helical; Name=6" evidence="2">
    <location>
        <begin position="185"/>
        <end position="205"/>
    </location>
</feature>
<feature type="transmembrane region" description="Helical; Name=7" evidence="2">
    <location>
        <begin position="267"/>
        <end position="287"/>
    </location>
</feature>
<feature type="transmembrane region" description="Helical; Name=8" evidence="2">
    <location>
        <begin position="305"/>
        <end position="325"/>
    </location>
</feature>
<feature type="transmembrane region" description="Helical; Name=9" evidence="2">
    <location>
        <begin position="333"/>
        <end position="353"/>
    </location>
</feature>
<feature type="transmembrane region" description="Helical; Name=10" evidence="2">
    <location>
        <begin position="366"/>
        <end position="386"/>
    </location>
</feature>
<feature type="transmembrane region" description="Helical; Name=11" evidence="2">
    <location>
        <begin position="406"/>
        <end position="426"/>
    </location>
</feature>
<feature type="transmembrane region" description="Helical; Name=12" evidence="2">
    <location>
        <begin position="432"/>
        <end position="452"/>
    </location>
</feature>
<gene>
    <name type="ordered locus">At4g04760</name>
    <name type="ORF">T4B21.9</name>
</gene>
<sequence length="478" mass="51411">MAEEGLLLPASSTSSSSSLLSEISNACTRPFVLAFIVGSCGAFAFGCIIGYSAPTQTSIMKDLNLSIADYSLFGSILTVGLILGALICGKLTDLVGRVKTIWITNILFVIGWFAIAFAKGVWLLDLGRLLQGISIGISVYLGPVYITEIAPRNLRGAASSFAQLFAGVGISVFYALGTIVAWRNLAILGCIPSLMVLPLLFFIPESPRWLAKVGREMEVEAVLLSLRGEKSDVSDEAAEILEYTEHVKQQQDIDDRGFFKLFQRKYAFSLTIGVVLIALPQLGGLNGYSFYTDSIFISTGVSSDFGFISTSVVQMFGGILGTVLVDVSGRRTLLLVSQAGMFLGCLTTAISFFLKENHCWETGTPVLALFSVMVYFGSYGSGMGSIPWIIASEIYPVDVKGAAGTMCNLVSSISAWLVAYSFSYLLQWSSTGTFLMFATVAGLGFVFIAKLVPETKGKSLEEIQSLFTDSPPQDSTIF</sequence>
<protein>
    <recommendedName>
        <fullName>Sugar transporter ERD6-like 15</fullName>
    </recommendedName>
</protein>
<accession>Q9M0Z9</accession>
<accession>F4JGX2</accession>
<accession>Q9ZS98</accession>
<keyword id="KW-0472">Membrane</keyword>
<keyword id="KW-1185">Reference proteome</keyword>
<keyword id="KW-0762">Sugar transport</keyword>
<keyword id="KW-0812">Transmembrane</keyword>
<keyword id="KW-1133">Transmembrane helix</keyword>
<keyword id="KW-0813">Transport</keyword>
<proteinExistence type="inferred from homology"/>
<organism>
    <name type="scientific">Arabidopsis thaliana</name>
    <name type="common">Mouse-ear cress</name>
    <dbReference type="NCBI Taxonomy" id="3702"/>
    <lineage>
        <taxon>Eukaryota</taxon>
        <taxon>Viridiplantae</taxon>
        <taxon>Streptophyta</taxon>
        <taxon>Embryophyta</taxon>
        <taxon>Tracheophyta</taxon>
        <taxon>Spermatophyta</taxon>
        <taxon>Magnoliopsida</taxon>
        <taxon>eudicotyledons</taxon>
        <taxon>Gunneridae</taxon>
        <taxon>Pentapetalae</taxon>
        <taxon>rosids</taxon>
        <taxon>malvids</taxon>
        <taxon>Brassicales</taxon>
        <taxon>Brassicaceae</taxon>
        <taxon>Camelineae</taxon>
        <taxon>Arabidopsis</taxon>
    </lineage>
</organism>
<dbReference type="EMBL" id="AF118223">
    <property type="protein sequence ID" value="AAD03460.1"/>
    <property type="status" value="ALT_SEQ"/>
    <property type="molecule type" value="Genomic_DNA"/>
</dbReference>
<dbReference type="EMBL" id="AL161501">
    <property type="protein sequence ID" value="CAB80841.1"/>
    <property type="status" value="ALT_SEQ"/>
    <property type="molecule type" value="Genomic_DNA"/>
</dbReference>
<dbReference type="EMBL" id="CP002687">
    <property type="protein sequence ID" value="AEE82422.2"/>
    <property type="molecule type" value="Genomic_DNA"/>
</dbReference>
<dbReference type="PIR" id="H85059">
    <property type="entry name" value="H85059"/>
</dbReference>
<dbReference type="RefSeq" id="NP_001319869.1">
    <property type="nucleotide sequence ID" value="NM_001340509.1"/>
</dbReference>
<dbReference type="SMR" id="Q9M0Z9"/>
<dbReference type="BioGRID" id="11123">
    <property type="interactions" value="2"/>
</dbReference>
<dbReference type="FunCoup" id="Q9M0Z9">
    <property type="interactions" value="581"/>
</dbReference>
<dbReference type="IntAct" id="Q9M0Z9">
    <property type="interactions" value="2"/>
</dbReference>
<dbReference type="STRING" id="3702.Q9M0Z9"/>
<dbReference type="ProteomicsDB" id="224725"/>
<dbReference type="EnsemblPlants" id="AT4G04760.1">
    <property type="protein sequence ID" value="AT4G04760.1"/>
    <property type="gene ID" value="AT4G04760"/>
</dbReference>
<dbReference type="GeneID" id="825812"/>
<dbReference type="Gramene" id="AT4G04760.1">
    <property type="protein sequence ID" value="AT4G04760.1"/>
    <property type="gene ID" value="AT4G04760"/>
</dbReference>
<dbReference type="KEGG" id="ath:AT4G04760"/>
<dbReference type="Araport" id="AT4G04760"/>
<dbReference type="TAIR" id="AT4G04760"/>
<dbReference type="InParanoid" id="Q9M0Z9"/>
<dbReference type="OMA" id="LENHCWE"/>
<dbReference type="PRO" id="PR:Q9M0Z9"/>
<dbReference type="Proteomes" id="UP000006548">
    <property type="component" value="Chromosome 4"/>
</dbReference>
<dbReference type="ExpressionAtlas" id="Q9M0Z9">
    <property type="expression patterns" value="baseline and differential"/>
</dbReference>
<dbReference type="GO" id="GO:0016020">
    <property type="term" value="C:membrane"/>
    <property type="evidence" value="ECO:0007669"/>
    <property type="project" value="UniProtKB-SubCell"/>
</dbReference>
<dbReference type="GO" id="GO:0051119">
    <property type="term" value="F:sugar transmembrane transporter activity"/>
    <property type="evidence" value="ECO:0007669"/>
    <property type="project" value="InterPro"/>
</dbReference>
<dbReference type="CDD" id="cd17358">
    <property type="entry name" value="MFS_GLUT6_8_Class3_like"/>
    <property type="match status" value="1"/>
</dbReference>
<dbReference type="FunFam" id="1.20.1250.20:FF:000043">
    <property type="entry name" value="sugar transporter ERD6-like 6"/>
    <property type="match status" value="1"/>
</dbReference>
<dbReference type="Gene3D" id="1.20.1250.20">
    <property type="entry name" value="MFS general substrate transporter like domains"/>
    <property type="match status" value="1"/>
</dbReference>
<dbReference type="InterPro" id="IPR020846">
    <property type="entry name" value="MFS_dom"/>
</dbReference>
<dbReference type="InterPro" id="IPR044775">
    <property type="entry name" value="MFS_ERD6/Tret1-like"/>
</dbReference>
<dbReference type="InterPro" id="IPR005828">
    <property type="entry name" value="MFS_sugar_transport-like"/>
</dbReference>
<dbReference type="InterPro" id="IPR036259">
    <property type="entry name" value="MFS_trans_sf"/>
</dbReference>
<dbReference type="InterPro" id="IPR050549">
    <property type="entry name" value="MFS_Trehalose_Transporter"/>
</dbReference>
<dbReference type="InterPro" id="IPR003663">
    <property type="entry name" value="Sugar/inositol_transpt"/>
</dbReference>
<dbReference type="InterPro" id="IPR005829">
    <property type="entry name" value="Sugar_transporter_CS"/>
</dbReference>
<dbReference type="PANTHER" id="PTHR48021">
    <property type="match status" value="1"/>
</dbReference>
<dbReference type="PANTHER" id="PTHR48021:SF70">
    <property type="entry name" value="SUGAR TRANSPORTER ERD6-LIKE 15"/>
    <property type="match status" value="1"/>
</dbReference>
<dbReference type="Pfam" id="PF00083">
    <property type="entry name" value="Sugar_tr"/>
    <property type="match status" value="1"/>
</dbReference>
<dbReference type="PRINTS" id="PR00171">
    <property type="entry name" value="SUGRTRNSPORT"/>
</dbReference>
<dbReference type="SUPFAM" id="SSF103473">
    <property type="entry name" value="MFS general substrate transporter"/>
    <property type="match status" value="1"/>
</dbReference>
<dbReference type="PROSITE" id="PS50850">
    <property type="entry name" value="MFS"/>
    <property type="match status" value="1"/>
</dbReference>
<dbReference type="PROSITE" id="PS00217">
    <property type="entry name" value="SUGAR_TRANSPORT_2"/>
    <property type="match status" value="1"/>
</dbReference>